<sequence>TIINVKCTSPKQCSKPCKELYGSSAGAKCMNGKCKCYNN</sequence>
<accession>P08815</accession>
<evidence type="ECO:0000250" key="1"/>
<evidence type="ECO:0000255" key="2"/>
<evidence type="ECO:0000269" key="3">
    <source>
    </source>
</evidence>
<evidence type="ECO:0000269" key="4">
    <source>
    </source>
</evidence>
<evidence type="ECO:0000269" key="5">
    <source>
    </source>
</evidence>
<evidence type="ECO:0000269" key="6">
    <source ref="1"/>
</evidence>
<evidence type="ECO:0000269" key="7">
    <source ref="4"/>
</evidence>
<evidence type="ECO:0000303" key="8">
    <source>
    </source>
</evidence>
<evidence type="ECO:0000303" key="9">
    <source ref="1"/>
</evidence>
<evidence type="ECO:0000305" key="10"/>
<evidence type="ECO:0000305" key="11">
    <source ref="1"/>
</evidence>
<evidence type="ECO:0000312" key="12">
    <source>
        <dbReference type="PDB" id="1SXM"/>
    </source>
</evidence>
<evidence type="ECO:0007829" key="13">
    <source>
        <dbReference type="PDB" id="1SXM"/>
    </source>
</evidence>
<keyword id="KW-0002">3D-structure</keyword>
<keyword id="KW-0027">Amidation</keyword>
<keyword id="KW-1221">Calcium-activated potassium channel impairing toxin</keyword>
<keyword id="KW-0903">Direct protein sequencing</keyword>
<keyword id="KW-1015">Disulfide bond</keyword>
<keyword id="KW-0872">Ion channel impairing toxin</keyword>
<keyword id="KW-0528">Neurotoxin</keyword>
<keyword id="KW-0632">Potassium channel impairing toxin</keyword>
<keyword id="KW-0964">Secreted</keyword>
<keyword id="KW-0800">Toxin</keyword>
<keyword id="KW-1220">Voltage-gated potassium channel impairing toxin</keyword>
<organism>
    <name type="scientific">Centruroides noxius</name>
    <name type="common">Mexican scorpion</name>
    <dbReference type="NCBI Taxonomy" id="6878"/>
    <lineage>
        <taxon>Eukaryota</taxon>
        <taxon>Metazoa</taxon>
        <taxon>Ecdysozoa</taxon>
        <taxon>Arthropoda</taxon>
        <taxon>Chelicerata</taxon>
        <taxon>Arachnida</taxon>
        <taxon>Scorpiones</taxon>
        <taxon>Buthida</taxon>
        <taxon>Buthoidea</taxon>
        <taxon>Buthidae</taxon>
        <taxon>Centruroides</taxon>
    </lineage>
</organism>
<feature type="peptide" id="PRO_0000044905" description="Potassium channel toxin alpha-KTx 2.1" evidence="6">
    <location>
        <begin position="1"/>
        <end position="39"/>
    </location>
</feature>
<feature type="region of interest" description="Interaction with Ca(2+)-activated K(+) channels" evidence="2">
    <location>
        <begin position="26"/>
        <end position="34"/>
    </location>
</feature>
<feature type="site" description="Basic residue of the functional dyad" evidence="1">
    <location>
        <position position="28"/>
    </location>
</feature>
<feature type="site" description="Aromatic residue of the functional dyad" evidence="1">
    <location>
        <position position="37"/>
    </location>
</feature>
<feature type="modified residue" description="Asparagine amide" evidence="7">
    <location>
        <position position="39"/>
    </location>
</feature>
<feature type="disulfide bond" evidence="5 12">
    <location>
        <begin position="7"/>
        <end position="29"/>
    </location>
</feature>
<feature type="disulfide bond" evidence="5 12">
    <location>
        <begin position="13"/>
        <end position="34"/>
    </location>
</feature>
<feature type="disulfide bond" evidence="5 12">
    <location>
        <begin position="17"/>
        <end position="36"/>
    </location>
</feature>
<feature type="turn" evidence="13">
    <location>
        <begin position="14"/>
        <end position="16"/>
    </location>
</feature>
<feature type="helix" evidence="13">
    <location>
        <begin position="17"/>
        <end position="20"/>
    </location>
</feature>
<feature type="strand" evidence="13">
    <location>
        <begin position="27"/>
        <end position="30"/>
    </location>
</feature>
<feature type="strand" evidence="13">
    <location>
        <begin position="33"/>
        <end position="36"/>
    </location>
</feature>
<protein>
    <recommendedName>
        <fullName evidence="10">Potassium channel toxin alpha-KTx 2.1</fullName>
    </recommendedName>
    <alternativeName>
        <fullName evidence="8 9">Noxiustoxin</fullName>
        <shortName evidence="8">NTx</shortName>
    </alternativeName>
    <alternativeName>
        <fullName>Toxin II.11</fullName>
    </alternativeName>
</protein>
<dbReference type="PDB" id="1SXM">
    <property type="method" value="NMR"/>
    <property type="chains" value="A=1-39"/>
</dbReference>
<dbReference type="PDBsum" id="1SXM"/>
<dbReference type="SMR" id="P08815"/>
<dbReference type="EvolutionaryTrace" id="P08815"/>
<dbReference type="GO" id="GO:0005576">
    <property type="term" value="C:extracellular region"/>
    <property type="evidence" value="ECO:0007669"/>
    <property type="project" value="UniProtKB-SubCell"/>
</dbReference>
<dbReference type="GO" id="GO:0008200">
    <property type="term" value="F:ion channel inhibitor activity"/>
    <property type="evidence" value="ECO:0007669"/>
    <property type="project" value="InterPro"/>
</dbReference>
<dbReference type="GO" id="GO:0015459">
    <property type="term" value="F:potassium channel regulator activity"/>
    <property type="evidence" value="ECO:0007669"/>
    <property type="project" value="UniProtKB-KW"/>
</dbReference>
<dbReference type="GO" id="GO:0090729">
    <property type="term" value="F:toxin activity"/>
    <property type="evidence" value="ECO:0007669"/>
    <property type="project" value="UniProtKB-KW"/>
</dbReference>
<dbReference type="Gene3D" id="3.30.30.10">
    <property type="entry name" value="Knottin, scorpion toxin-like"/>
    <property type="match status" value="1"/>
</dbReference>
<dbReference type="InterPro" id="IPR036574">
    <property type="entry name" value="Scorpion_toxin-like_sf"/>
</dbReference>
<dbReference type="InterPro" id="IPR001947">
    <property type="entry name" value="Scorpion_toxinS_K_inh"/>
</dbReference>
<dbReference type="Pfam" id="PF00451">
    <property type="entry name" value="Toxin_2"/>
    <property type="match status" value="1"/>
</dbReference>
<dbReference type="PRINTS" id="PR00286">
    <property type="entry name" value="CHARYBDTOXIN"/>
</dbReference>
<dbReference type="SUPFAM" id="SSF57095">
    <property type="entry name" value="Scorpion toxin-like"/>
    <property type="match status" value="1"/>
</dbReference>
<dbReference type="PROSITE" id="PS01138">
    <property type="entry name" value="SCORP_SHORT_TOXIN"/>
    <property type="match status" value="1"/>
</dbReference>
<comment type="function">
    <text evidence="3 4">Blocks voltage-gated potassium channels (mKv1.1/KCNA1 (Kd&gt;25 nM), rKv1.2/KCNA2 (Kd=2 nM), mKv1.3/KCNA3 (Kd=1 nM), hKv1.5/KCNA5 (Kd&gt;25 nM) and mKv3.1/KCNC1 (Kd&gt;25 nM)) and calcium-activated potassium channels (KCa1.1/KCNMA1 and KCa3.1/KCNN4, Kd&gt;25 nM).</text>
</comment>
<comment type="subcellular location">
    <subcellularLocation>
        <location evidence="6">Secreted</location>
    </subcellularLocation>
</comment>
<comment type="tissue specificity">
    <text evidence="11">Expressed by the venom gland.</text>
</comment>
<comment type="domain">
    <text evidence="5">Has the structural arrangement of an alpha-helix connected to a beta-sheet by disulfide bonds (CSalpha/beta).</text>
</comment>
<comment type="similarity">
    <text evidence="10">Belongs to the short scorpion toxin superfamily. Potassium channel inhibitor family. Alpha-KTx 02 subfamily.</text>
</comment>
<proteinExistence type="evidence at protein level"/>
<reference key="1">
    <citation type="journal article" date="1982" name="Carlsberg Res. Commun.">
        <title>The primary structure of noxiustoxin. A K channel blocking peptide, purified from the venom of the scorpion Centruroides noxius Hoffmann.</title>
        <authorList>
            <person name="Possani L.D."/>
            <person name="Martin B.M."/>
            <person name="Svendsen I."/>
        </authorList>
    </citation>
    <scope>PROTEIN SEQUENCE</scope>
    <scope>SUBCELLULAR LOCATION</scope>
    <source>
        <tissue>Venom</tissue>
    </source>
</reference>
<reference key="2">
    <citation type="journal article" date="1988" name="FEBS Lett.">
        <title>Charybdotoxin and noxiustoxin, two homologous peptide inhibitors of the K+ (Ca2+) channel.</title>
        <authorList>
            <person name="Valdivia H.H."/>
            <person name="Smith J.S."/>
            <person name="Martin B.M."/>
            <person name="Coronado R."/>
            <person name="Possani L.D."/>
        </authorList>
    </citation>
    <scope>FUNCTION</scope>
</reference>
<reference key="3">
    <citation type="journal article" date="1989" name="J. Neural Transm.">
        <title>Synthetic peptides corresponding to the sequence of noxiustoxin indicate that the active site of this K+ channel blocker is located on its amino-terminal portion.</title>
        <authorList>
            <person name="Gurrola G.B."/>
            <person name="Molinar-Rode R."/>
            <person name="Sitges M."/>
            <person name="Bayon A."/>
            <person name="Possani L.D."/>
        </authorList>
    </citation>
    <scope>SYNTHESIS OF 1-9 AND 30-39</scope>
</reference>
<reference key="4">
    <citation type="book" date="1993" name="Peptides 1992">
        <title>Structure revision of the scorpion toxin noxiustoxin through total chemical synthesis.</title>
        <editorList>
            <person name="Schneider C.H."/>
            <person name="Eberles A.N."/>
        </editorList>
        <authorList>
            <person name="Nutt R.F."/>
            <person name="Arison B.H."/>
            <person name="Smith J.S."/>
        </authorList>
    </citation>
    <scope>SYNTHESIS</scope>
    <scope>AMIDATION AT ASN-39</scope>
</reference>
<reference key="5">
    <citation type="journal article" date="1994" name="Mol. Pharmacol.">
        <title>Pharmacological characterization of five cloned voltage-gated K+ channels, types Kv1.1, 1.2, 1.3, 1.5, and 3.1, stably expressed in mammalian cell lines.</title>
        <authorList>
            <person name="Grissmer S."/>
            <person name="Nguyen A.N."/>
            <person name="Aiyar J."/>
            <person name="Hanson D.C."/>
            <person name="Mather R.J."/>
            <person name="Gutman G.A."/>
            <person name="Karmilowicz M.J."/>
            <person name="Auperin D.D."/>
            <person name="Chandy K.G."/>
        </authorList>
    </citation>
    <scope>FUNCTION</scope>
</reference>
<reference key="6">
    <citation type="journal article" date="1995" name="Biochemistry">
        <title>Determination of the three-dimensional solution structure of noxiustoxin: analysis of structural differences with related short-chain scorpion toxins.</title>
        <authorList>
            <person name="Dauplais M."/>
            <person name="Gilquin B."/>
            <person name="Possani L.D."/>
            <person name="Gurrola-Briones G."/>
            <person name="Roumestand C."/>
            <person name="Menez A."/>
        </authorList>
    </citation>
    <scope>STRUCTURE BY NMR</scope>
    <scope>DISULFIDE BONDS</scope>
</reference>
<name>KAX21_CENNO</name>